<sequence>MSIILGVDPGSRITGYGVIQCIGRHQTYLGSGCIRTASDDLPYRLKQIFDGVSEIIRQYQPDEFAIERVFMAKNADSALKLGQARGAAIVAATNADLPVAEYSATQIKSAVVGTGKAQKSQVQHMVQQILKLPAAPQADAADALGVAICHFHTSQSLIALGGRANARTYGRYR</sequence>
<proteinExistence type="inferred from homology"/>
<comment type="function">
    <text evidence="1">The RuvA-RuvB-RuvC complex processes Holliday junction (HJ) DNA during genetic recombination and DNA repair. Endonuclease that resolves HJ intermediates. Cleaves cruciform DNA by making single-stranded nicks across the HJ at symmetrical positions within the homologous arms, yielding a 5'-phosphate and a 3'-hydroxyl group; requires a central core of homology in the junction. The consensus cleavage sequence is 5'-(A/T)TT(C/G)-3'. Cleavage occurs on the 3'-side of the TT dinucleotide at the point of strand exchange. HJ branch migration catalyzed by RuvA-RuvB allows RuvC to scan DNA until it finds its consensus sequence, where it cleaves and resolves the cruciform DNA.</text>
</comment>
<comment type="catalytic activity">
    <reaction evidence="1">
        <text>Endonucleolytic cleavage at a junction such as a reciprocal single-stranded crossover between two homologous DNA duplexes (Holliday junction).</text>
        <dbReference type="EC" id="3.1.21.10"/>
    </reaction>
</comment>
<comment type="cofactor">
    <cofactor evidence="1">
        <name>Mg(2+)</name>
        <dbReference type="ChEBI" id="CHEBI:18420"/>
    </cofactor>
    <text evidence="1">Binds 2 Mg(2+) ion per subunit.</text>
</comment>
<comment type="subunit">
    <text evidence="1">Homodimer which binds Holliday junction (HJ) DNA. The HJ becomes 2-fold symmetrical on binding to RuvC with unstacked arms; it has a different conformation from HJ DNA in complex with RuvA. In the full resolvosome a probable DNA-RuvA(4)-RuvB(12)-RuvC(2) complex forms which resolves the HJ.</text>
</comment>
<comment type="subcellular location">
    <subcellularLocation>
        <location evidence="1">Cytoplasm</location>
    </subcellularLocation>
</comment>
<comment type="similarity">
    <text evidence="1">Belongs to the RuvC family.</text>
</comment>
<accession>A8FUW8</accession>
<evidence type="ECO:0000255" key="1">
    <source>
        <dbReference type="HAMAP-Rule" id="MF_00034"/>
    </source>
</evidence>
<keyword id="KW-0963">Cytoplasm</keyword>
<keyword id="KW-0227">DNA damage</keyword>
<keyword id="KW-0233">DNA recombination</keyword>
<keyword id="KW-0234">DNA repair</keyword>
<keyword id="KW-0238">DNA-binding</keyword>
<keyword id="KW-0255">Endonuclease</keyword>
<keyword id="KW-0378">Hydrolase</keyword>
<keyword id="KW-0460">Magnesium</keyword>
<keyword id="KW-0479">Metal-binding</keyword>
<keyword id="KW-0540">Nuclease</keyword>
<keyword id="KW-1185">Reference proteome</keyword>
<reference key="1">
    <citation type="submission" date="2007-08" db="EMBL/GenBank/DDBJ databases">
        <title>Complete sequence of Shewanella sediminis HAW-EB3.</title>
        <authorList>
            <consortium name="US DOE Joint Genome Institute"/>
            <person name="Copeland A."/>
            <person name="Lucas S."/>
            <person name="Lapidus A."/>
            <person name="Barry K."/>
            <person name="Glavina del Rio T."/>
            <person name="Dalin E."/>
            <person name="Tice H."/>
            <person name="Pitluck S."/>
            <person name="Chertkov O."/>
            <person name="Brettin T."/>
            <person name="Bruce D."/>
            <person name="Detter J.C."/>
            <person name="Han C."/>
            <person name="Schmutz J."/>
            <person name="Larimer F."/>
            <person name="Land M."/>
            <person name="Hauser L."/>
            <person name="Kyrpides N."/>
            <person name="Kim E."/>
            <person name="Zhao J.-S."/>
            <person name="Richardson P."/>
        </authorList>
    </citation>
    <scope>NUCLEOTIDE SEQUENCE [LARGE SCALE GENOMIC DNA]</scope>
    <source>
        <strain>HAW-EB3</strain>
    </source>
</reference>
<gene>
    <name evidence="1" type="primary">ruvC</name>
    <name type="ordered locus">Ssed_2032</name>
</gene>
<feature type="chain" id="PRO_1000074502" description="Crossover junction endodeoxyribonuclease RuvC">
    <location>
        <begin position="1"/>
        <end position="173"/>
    </location>
</feature>
<feature type="active site" evidence="1">
    <location>
        <position position="8"/>
    </location>
</feature>
<feature type="active site" evidence="1">
    <location>
        <position position="67"/>
    </location>
</feature>
<feature type="active site" evidence="1">
    <location>
        <position position="139"/>
    </location>
</feature>
<feature type="binding site" evidence="1">
    <location>
        <position position="8"/>
    </location>
    <ligand>
        <name>Mg(2+)</name>
        <dbReference type="ChEBI" id="CHEBI:18420"/>
        <label>1</label>
    </ligand>
</feature>
<feature type="binding site" evidence="1">
    <location>
        <position position="67"/>
    </location>
    <ligand>
        <name>Mg(2+)</name>
        <dbReference type="ChEBI" id="CHEBI:18420"/>
        <label>2</label>
    </ligand>
</feature>
<feature type="binding site" evidence="1">
    <location>
        <position position="139"/>
    </location>
    <ligand>
        <name>Mg(2+)</name>
        <dbReference type="ChEBI" id="CHEBI:18420"/>
        <label>1</label>
    </ligand>
</feature>
<protein>
    <recommendedName>
        <fullName evidence="1">Crossover junction endodeoxyribonuclease RuvC</fullName>
        <ecNumber evidence="1">3.1.21.10</ecNumber>
    </recommendedName>
    <alternativeName>
        <fullName evidence="1">Holliday junction nuclease RuvC</fullName>
    </alternativeName>
    <alternativeName>
        <fullName evidence="1">Holliday junction resolvase RuvC</fullName>
    </alternativeName>
</protein>
<organism>
    <name type="scientific">Shewanella sediminis (strain HAW-EB3)</name>
    <dbReference type="NCBI Taxonomy" id="425104"/>
    <lineage>
        <taxon>Bacteria</taxon>
        <taxon>Pseudomonadati</taxon>
        <taxon>Pseudomonadota</taxon>
        <taxon>Gammaproteobacteria</taxon>
        <taxon>Alteromonadales</taxon>
        <taxon>Shewanellaceae</taxon>
        <taxon>Shewanella</taxon>
    </lineage>
</organism>
<name>RUVC_SHESH</name>
<dbReference type="EC" id="3.1.21.10" evidence="1"/>
<dbReference type="EMBL" id="CP000821">
    <property type="protein sequence ID" value="ABV36641.1"/>
    <property type="molecule type" value="Genomic_DNA"/>
</dbReference>
<dbReference type="RefSeq" id="WP_012142376.1">
    <property type="nucleotide sequence ID" value="NC_009831.1"/>
</dbReference>
<dbReference type="SMR" id="A8FUW8"/>
<dbReference type="STRING" id="425104.Ssed_2032"/>
<dbReference type="KEGG" id="sse:Ssed_2032"/>
<dbReference type="eggNOG" id="COG0817">
    <property type="taxonomic scope" value="Bacteria"/>
</dbReference>
<dbReference type="HOGENOM" id="CLU_091257_2_1_6"/>
<dbReference type="OrthoDB" id="9805499at2"/>
<dbReference type="Proteomes" id="UP000002015">
    <property type="component" value="Chromosome"/>
</dbReference>
<dbReference type="GO" id="GO:0005737">
    <property type="term" value="C:cytoplasm"/>
    <property type="evidence" value="ECO:0007669"/>
    <property type="project" value="UniProtKB-SubCell"/>
</dbReference>
<dbReference type="GO" id="GO:0048476">
    <property type="term" value="C:Holliday junction resolvase complex"/>
    <property type="evidence" value="ECO:0007669"/>
    <property type="project" value="UniProtKB-UniRule"/>
</dbReference>
<dbReference type="GO" id="GO:0008821">
    <property type="term" value="F:crossover junction DNA endonuclease activity"/>
    <property type="evidence" value="ECO:0007669"/>
    <property type="project" value="UniProtKB-UniRule"/>
</dbReference>
<dbReference type="GO" id="GO:0003677">
    <property type="term" value="F:DNA binding"/>
    <property type="evidence" value="ECO:0007669"/>
    <property type="project" value="UniProtKB-KW"/>
</dbReference>
<dbReference type="GO" id="GO:0000287">
    <property type="term" value="F:magnesium ion binding"/>
    <property type="evidence" value="ECO:0007669"/>
    <property type="project" value="UniProtKB-UniRule"/>
</dbReference>
<dbReference type="GO" id="GO:0006310">
    <property type="term" value="P:DNA recombination"/>
    <property type="evidence" value="ECO:0007669"/>
    <property type="project" value="UniProtKB-UniRule"/>
</dbReference>
<dbReference type="GO" id="GO:0006281">
    <property type="term" value="P:DNA repair"/>
    <property type="evidence" value="ECO:0007669"/>
    <property type="project" value="UniProtKB-UniRule"/>
</dbReference>
<dbReference type="CDD" id="cd16962">
    <property type="entry name" value="RuvC"/>
    <property type="match status" value="1"/>
</dbReference>
<dbReference type="FunFam" id="3.30.420.10:FF:000002">
    <property type="entry name" value="Crossover junction endodeoxyribonuclease RuvC"/>
    <property type="match status" value="1"/>
</dbReference>
<dbReference type="Gene3D" id="3.30.420.10">
    <property type="entry name" value="Ribonuclease H-like superfamily/Ribonuclease H"/>
    <property type="match status" value="1"/>
</dbReference>
<dbReference type="HAMAP" id="MF_00034">
    <property type="entry name" value="RuvC"/>
    <property type="match status" value="1"/>
</dbReference>
<dbReference type="InterPro" id="IPR012337">
    <property type="entry name" value="RNaseH-like_sf"/>
</dbReference>
<dbReference type="InterPro" id="IPR036397">
    <property type="entry name" value="RNaseH_sf"/>
</dbReference>
<dbReference type="InterPro" id="IPR020563">
    <property type="entry name" value="X-over_junc_endoDNase_Mg_BS"/>
</dbReference>
<dbReference type="InterPro" id="IPR002176">
    <property type="entry name" value="X-over_junc_endoDNase_RuvC"/>
</dbReference>
<dbReference type="NCBIfam" id="NF000711">
    <property type="entry name" value="PRK00039.2-1"/>
    <property type="match status" value="1"/>
</dbReference>
<dbReference type="NCBIfam" id="TIGR00228">
    <property type="entry name" value="ruvC"/>
    <property type="match status" value="1"/>
</dbReference>
<dbReference type="PANTHER" id="PTHR30194">
    <property type="entry name" value="CROSSOVER JUNCTION ENDODEOXYRIBONUCLEASE RUVC"/>
    <property type="match status" value="1"/>
</dbReference>
<dbReference type="PANTHER" id="PTHR30194:SF3">
    <property type="entry name" value="CROSSOVER JUNCTION ENDODEOXYRIBONUCLEASE RUVC"/>
    <property type="match status" value="1"/>
</dbReference>
<dbReference type="Pfam" id="PF02075">
    <property type="entry name" value="RuvC"/>
    <property type="match status" value="1"/>
</dbReference>
<dbReference type="PRINTS" id="PR00696">
    <property type="entry name" value="RSOLVASERUVC"/>
</dbReference>
<dbReference type="SUPFAM" id="SSF53098">
    <property type="entry name" value="Ribonuclease H-like"/>
    <property type="match status" value="1"/>
</dbReference>
<dbReference type="PROSITE" id="PS01321">
    <property type="entry name" value="RUVC"/>
    <property type="match status" value="1"/>
</dbReference>